<feature type="chain" id="PRO_1000060780" description="Glycerol-3-phosphate dehydrogenase [NAD(P)+]">
    <location>
        <begin position="1"/>
        <end position="332"/>
    </location>
</feature>
<feature type="active site" description="Proton acceptor" evidence="1">
    <location>
        <position position="191"/>
    </location>
</feature>
<feature type="binding site" evidence="1">
    <location>
        <position position="13"/>
    </location>
    <ligand>
        <name>NADPH</name>
        <dbReference type="ChEBI" id="CHEBI:57783"/>
    </ligand>
</feature>
<feature type="binding site" evidence="1">
    <location>
        <position position="33"/>
    </location>
    <ligand>
        <name>NADPH</name>
        <dbReference type="ChEBI" id="CHEBI:57783"/>
    </ligand>
</feature>
<feature type="binding site" evidence="1">
    <location>
        <position position="107"/>
    </location>
    <ligand>
        <name>NADPH</name>
        <dbReference type="ChEBI" id="CHEBI:57783"/>
    </ligand>
</feature>
<feature type="binding site" evidence="1">
    <location>
        <position position="107"/>
    </location>
    <ligand>
        <name>sn-glycerol 3-phosphate</name>
        <dbReference type="ChEBI" id="CHEBI:57597"/>
    </ligand>
</feature>
<feature type="binding site" evidence="1">
    <location>
        <position position="136"/>
    </location>
    <ligand>
        <name>sn-glycerol 3-phosphate</name>
        <dbReference type="ChEBI" id="CHEBI:57597"/>
    </ligand>
</feature>
<feature type="binding site" evidence="1">
    <location>
        <position position="138"/>
    </location>
    <ligand>
        <name>sn-glycerol 3-phosphate</name>
        <dbReference type="ChEBI" id="CHEBI:57597"/>
    </ligand>
</feature>
<feature type="binding site" evidence="1">
    <location>
        <position position="140"/>
    </location>
    <ligand>
        <name>NADPH</name>
        <dbReference type="ChEBI" id="CHEBI:57783"/>
    </ligand>
</feature>
<feature type="binding site" evidence="1">
    <location>
        <position position="191"/>
    </location>
    <ligand>
        <name>sn-glycerol 3-phosphate</name>
        <dbReference type="ChEBI" id="CHEBI:57597"/>
    </ligand>
</feature>
<feature type="binding site" evidence="1">
    <location>
        <position position="244"/>
    </location>
    <ligand>
        <name>sn-glycerol 3-phosphate</name>
        <dbReference type="ChEBI" id="CHEBI:57597"/>
    </ligand>
</feature>
<feature type="binding site" evidence="1">
    <location>
        <position position="254"/>
    </location>
    <ligand>
        <name>sn-glycerol 3-phosphate</name>
        <dbReference type="ChEBI" id="CHEBI:57597"/>
    </ligand>
</feature>
<feature type="binding site" evidence="1">
    <location>
        <position position="255"/>
    </location>
    <ligand>
        <name>NADPH</name>
        <dbReference type="ChEBI" id="CHEBI:57783"/>
    </ligand>
</feature>
<feature type="binding site" evidence="1">
    <location>
        <position position="255"/>
    </location>
    <ligand>
        <name>sn-glycerol 3-phosphate</name>
        <dbReference type="ChEBI" id="CHEBI:57597"/>
    </ligand>
</feature>
<feature type="binding site" evidence="1">
    <location>
        <position position="256"/>
    </location>
    <ligand>
        <name>sn-glycerol 3-phosphate</name>
        <dbReference type="ChEBI" id="CHEBI:57597"/>
    </ligand>
</feature>
<feature type="binding site" evidence="1">
    <location>
        <position position="280"/>
    </location>
    <ligand>
        <name>NADPH</name>
        <dbReference type="ChEBI" id="CHEBI:57783"/>
    </ligand>
</feature>
<organism>
    <name type="scientific">Alkalilimnicola ehrlichii (strain ATCC BAA-1101 / DSM 17681 / MLHE-1)</name>
    <dbReference type="NCBI Taxonomy" id="187272"/>
    <lineage>
        <taxon>Bacteria</taxon>
        <taxon>Pseudomonadati</taxon>
        <taxon>Pseudomonadota</taxon>
        <taxon>Gammaproteobacteria</taxon>
        <taxon>Chromatiales</taxon>
        <taxon>Ectothiorhodospiraceae</taxon>
        <taxon>Alkalilimnicola</taxon>
    </lineage>
</organism>
<keyword id="KW-0963">Cytoplasm</keyword>
<keyword id="KW-0444">Lipid biosynthesis</keyword>
<keyword id="KW-0443">Lipid metabolism</keyword>
<keyword id="KW-0520">NAD</keyword>
<keyword id="KW-0521">NADP</keyword>
<keyword id="KW-0547">Nucleotide-binding</keyword>
<keyword id="KW-0560">Oxidoreductase</keyword>
<keyword id="KW-0594">Phospholipid biosynthesis</keyword>
<keyword id="KW-1208">Phospholipid metabolism</keyword>
<keyword id="KW-1185">Reference proteome</keyword>
<sequence length="332" mass="34976">MNRPLGIIGAGAWGTALAIAAGHAGHPVRLWGRDTAAVQAMARDRVNRRNLPDCPLPDPVQPQPDLTALVAECDDLLLVVPSRAFESMLHTLAPLIERRHRLGWATKGLDAASGGLLSQVVQRVLKPLPPLAVLSGPSFAAEVGRGLPTAVTVAATDQGFASDLADAFRYERFRVYTSTDLVGVQLGGAVKNVLAIATGVADGLGFGANARAALITRGLAETRRLSEALGADPDTLTGLAGMGDLILTCTDDQSRNRRLGLALGRGEDLDEAVEAIGTVEGVRTADELHRLATQAGVEMPICEQVHLRLAGRVSTREAVENLLLRPGGRQEQ</sequence>
<accession>Q0A5H5</accession>
<evidence type="ECO:0000255" key="1">
    <source>
        <dbReference type="HAMAP-Rule" id="MF_00394"/>
    </source>
</evidence>
<protein>
    <recommendedName>
        <fullName evidence="1">Glycerol-3-phosphate dehydrogenase [NAD(P)+]</fullName>
        <ecNumber evidence="1">1.1.1.94</ecNumber>
    </recommendedName>
    <alternativeName>
        <fullName evidence="1">NAD(P)(+)-dependent glycerol-3-phosphate dehydrogenase</fullName>
    </alternativeName>
    <alternativeName>
        <fullName evidence="1">NAD(P)H-dependent dihydroxyacetone-phosphate reductase</fullName>
    </alternativeName>
</protein>
<reference key="1">
    <citation type="submission" date="2006-08" db="EMBL/GenBank/DDBJ databases">
        <title>Complete sequence of Alkalilimnicola ehrilichei MLHE-1.</title>
        <authorList>
            <person name="Copeland A."/>
            <person name="Lucas S."/>
            <person name="Lapidus A."/>
            <person name="Barry K."/>
            <person name="Detter J.C."/>
            <person name="Glavina del Rio T."/>
            <person name="Hammon N."/>
            <person name="Israni S."/>
            <person name="Dalin E."/>
            <person name="Tice H."/>
            <person name="Pitluck S."/>
            <person name="Sims D."/>
            <person name="Brettin T."/>
            <person name="Bruce D."/>
            <person name="Han C."/>
            <person name="Tapia R."/>
            <person name="Gilna P."/>
            <person name="Schmutz J."/>
            <person name="Larimer F."/>
            <person name="Land M."/>
            <person name="Hauser L."/>
            <person name="Kyrpides N."/>
            <person name="Mikhailova N."/>
            <person name="Oremland R.S."/>
            <person name="Hoeft S.E."/>
            <person name="Switzer-Blum J."/>
            <person name="Kulp T."/>
            <person name="King G."/>
            <person name="Tabita R."/>
            <person name="Witte B."/>
            <person name="Santini J.M."/>
            <person name="Basu P."/>
            <person name="Hollibaugh J.T."/>
            <person name="Xie G."/>
            <person name="Stolz J.F."/>
            <person name="Richardson P."/>
        </authorList>
    </citation>
    <scope>NUCLEOTIDE SEQUENCE [LARGE SCALE GENOMIC DNA]</scope>
    <source>
        <strain>ATCC BAA-1101 / DSM 17681 / MLHE-1</strain>
    </source>
</reference>
<proteinExistence type="inferred from homology"/>
<dbReference type="EC" id="1.1.1.94" evidence="1"/>
<dbReference type="EMBL" id="CP000453">
    <property type="protein sequence ID" value="ABI57912.1"/>
    <property type="molecule type" value="Genomic_DNA"/>
</dbReference>
<dbReference type="RefSeq" id="WP_011630305.1">
    <property type="nucleotide sequence ID" value="NC_008340.1"/>
</dbReference>
<dbReference type="SMR" id="Q0A5H5"/>
<dbReference type="KEGG" id="aeh:Mlg_2572"/>
<dbReference type="eggNOG" id="COG0240">
    <property type="taxonomic scope" value="Bacteria"/>
</dbReference>
<dbReference type="HOGENOM" id="CLU_033449_0_2_6"/>
<dbReference type="OrthoDB" id="9812273at2"/>
<dbReference type="UniPathway" id="UPA00940"/>
<dbReference type="Proteomes" id="UP000001962">
    <property type="component" value="Chromosome"/>
</dbReference>
<dbReference type="GO" id="GO:0005829">
    <property type="term" value="C:cytosol"/>
    <property type="evidence" value="ECO:0007669"/>
    <property type="project" value="TreeGrafter"/>
</dbReference>
<dbReference type="GO" id="GO:0047952">
    <property type="term" value="F:glycerol-3-phosphate dehydrogenase [NAD(P)+] activity"/>
    <property type="evidence" value="ECO:0007669"/>
    <property type="project" value="UniProtKB-UniRule"/>
</dbReference>
<dbReference type="GO" id="GO:0051287">
    <property type="term" value="F:NAD binding"/>
    <property type="evidence" value="ECO:0007669"/>
    <property type="project" value="InterPro"/>
</dbReference>
<dbReference type="GO" id="GO:0005975">
    <property type="term" value="P:carbohydrate metabolic process"/>
    <property type="evidence" value="ECO:0007669"/>
    <property type="project" value="InterPro"/>
</dbReference>
<dbReference type="GO" id="GO:0046167">
    <property type="term" value="P:glycerol-3-phosphate biosynthetic process"/>
    <property type="evidence" value="ECO:0007669"/>
    <property type="project" value="UniProtKB-UniRule"/>
</dbReference>
<dbReference type="GO" id="GO:0046168">
    <property type="term" value="P:glycerol-3-phosphate catabolic process"/>
    <property type="evidence" value="ECO:0007669"/>
    <property type="project" value="InterPro"/>
</dbReference>
<dbReference type="GO" id="GO:0046474">
    <property type="term" value="P:glycerophospholipid biosynthetic process"/>
    <property type="evidence" value="ECO:0007669"/>
    <property type="project" value="TreeGrafter"/>
</dbReference>
<dbReference type="FunFam" id="1.10.1040.10:FF:000001">
    <property type="entry name" value="Glycerol-3-phosphate dehydrogenase [NAD(P)+]"/>
    <property type="match status" value="1"/>
</dbReference>
<dbReference type="FunFam" id="3.40.50.720:FF:000019">
    <property type="entry name" value="Glycerol-3-phosphate dehydrogenase [NAD(P)+]"/>
    <property type="match status" value="1"/>
</dbReference>
<dbReference type="Gene3D" id="1.10.1040.10">
    <property type="entry name" value="N-(1-d-carboxylethyl)-l-norvaline Dehydrogenase, domain 2"/>
    <property type="match status" value="1"/>
</dbReference>
<dbReference type="Gene3D" id="3.40.50.720">
    <property type="entry name" value="NAD(P)-binding Rossmann-like Domain"/>
    <property type="match status" value="1"/>
</dbReference>
<dbReference type="HAMAP" id="MF_00394">
    <property type="entry name" value="NAD_Glyc3P_dehydrog"/>
    <property type="match status" value="1"/>
</dbReference>
<dbReference type="InterPro" id="IPR008927">
    <property type="entry name" value="6-PGluconate_DH-like_C_sf"/>
</dbReference>
<dbReference type="InterPro" id="IPR013328">
    <property type="entry name" value="6PGD_dom2"/>
</dbReference>
<dbReference type="InterPro" id="IPR006168">
    <property type="entry name" value="G3P_DH_NAD-dep"/>
</dbReference>
<dbReference type="InterPro" id="IPR006109">
    <property type="entry name" value="G3P_DH_NAD-dep_C"/>
</dbReference>
<dbReference type="InterPro" id="IPR011128">
    <property type="entry name" value="G3P_DH_NAD-dep_N"/>
</dbReference>
<dbReference type="InterPro" id="IPR036291">
    <property type="entry name" value="NAD(P)-bd_dom_sf"/>
</dbReference>
<dbReference type="NCBIfam" id="NF000940">
    <property type="entry name" value="PRK00094.1-2"/>
    <property type="match status" value="1"/>
</dbReference>
<dbReference type="NCBIfam" id="NF000942">
    <property type="entry name" value="PRK00094.1-4"/>
    <property type="match status" value="1"/>
</dbReference>
<dbReference type="PANTHER" id="PTHR11728">
    <property type="entry name" value="GLYCEROL-3-PHOSPHATE DEHYDROGENASE"/>
    <property type="match status" value="1"/>
</dbReference>
<dbReference type="PANTHER" id="PTHR11728:SF1">
    <property type="entry name" value="GLYCEROL-3-PHOSPHATE DEHYDROGENASE [NAD(+)] 2, CHLOROPLASTIC"/>
    <property type="match status" value="1"/>
</dbReference>
<dbReference type="Pfam" id="PF07479">
    <property type="entry name" value="NAD_Gly3P_dh_C"/>
    <property type="match status" value="1"/>
</dbReference>
<dbReference type="Pfam" id="PF01210">
    <property type="entry name" value="NAD_Gly3P_dh_N"/>
    <property type="match status" value="1"/>
</dbReference>
<dbReference type="PIRSF" id="PIRSF000114">
    <property type="entry name" value="Glycerol-3-P_dh"/>
    <property type="match status" value="1"/>
</dbReference>
<dbReference type="PRINTS" id="PR00077">
    <property type="entry name" value="GPDHDRGNASE"/>
</dbReference>
<dbReference type="SUPFAM" id="SSF48179">
    <property type="entry name" value="6-phosphogluconate dehydrogenase C-terminal domain-like"/>
    <property type="match status" value="1"/>
</dbReference>
<dbReference type="SUPFAM" id="SSF51735">
    <property type="entry name" value="NAD(P)-binding Rossmann-fold domains"/>
    <property type="match status" value="1"/>
</dbReference>
<dbReference type="PROSITE" id="PS00957">
    <property type="entry name" value="NAD_G3PDH"/>
    <property type="match status" value="1"/>
</dbReference>
<name>GPDA_ALKEH</name>
<gene>
    <name evidence="1" type="primary">gpsA</name>
    <name type="ordered locus">Mlg_2572</name>
</gene>
<comment type="function">
    <text evidence="1">Catalyzes the reduction of the glycolytic intermediate dihydroxyacetone phosphate (DHAP) to sn-glycerol 3-phosphate (G3P), the key precursor for phospholipid synthesis.</text>
</comment>
<comment type="catalytic activity">
    <reaction evidence="1">
        <text>sn-glycerol 3-phosphate + NAD(+) = dihydroxyacetone phosphate + NADH + H(+)</text>
        <dbReference type="Rhea" id="RHEA:11092"/>
        <dbReference type="ChEBI" id="CHEBI:15378"/>
        <dbReference type="ChEBI" id="CHEBI:57540"/>
        <dbReference type="ChEBI" id="CHEBI:57597"/>
        <dbReference type="ChEBI" id="CHEBI:57642"/>
        <dbReference type="ChEBI" id="CHEBI:57945"/>
        <dbReference type="EC" id="1.1.1.94"/>
    </reaction>
    <physiologicalReaction direction="right-to-left" evidence="1">
        <dbReference type="Rhea" id="RHEA:11094"/>
    </physiologicalReaction>
</comment>
<comment type="catalytic activity">
    <reaction evidence="1">
        <text>sn-glycerol 3-phosphate + NADP(+) = dihydroxyacetone phosphate + NADPH + H(+)</text>
        <dbReference type="Rhea" id="RHEA:11096"/>
        <dbReference type="ChEBI" id="CHEBI:15378"/>
        <dbReference type="ChEBI" id="CHEBI:57597"/>
        <dbReference type="ChEBI" id="CHEBI:57642"/>
        <dbReference type="ChEBI" id="CHEBI:57783"/>
        <dbReference type="ChEBI" id="CHEBI:58349"/>
        <dbReference type="EC" id="1.1.1.94"/>
    </reaction>
    <physiologicalReaction direction="right-to-left" evidence="1">
        <dbReference type="Rhea" id="RHEA:11098"/>
    </physiologicalReaction>
</comment>
<comment type="pathway">
    <text evidence="1">Membrane lipid metabolism; glycerophospholipid metabolism.</text>
</comment>
<comment type="subcellular location">
    <subcellularLocation>
        <location evidence="1">Cytoplasm</location>
    </subcellularLocation>
</comment>
<comment type="similarity">
    <text evidence="1">Belongs to the NAD-dependent glycerol-3-phosphate dehydrogenase family.</text>
</comment>